<comment type="function">
    <text evidence="1">Part of the MsrPQ system that repairs oxidized periplasmic proteins containing methionine sulfoxide residues (Met-O), using respiratory chain electrons. Thus protects these proteins from oxidative-stress damage caused by reactive species of oxygen and chlorine generated by the host defense mechanisms. MsrPQ is essential for the maintenance of envelope integrity under bleach stress, rescuing a wide series of structurally unrelated periplasmic proteins from methionine oxidation, including the primary periplasmic chaperone SurA and the lipoprotein Pal. The catalytic subunit MsrP is non-stereospecific, being able to reduce both (R-) and (S-) diastereoisomers of methionine sulfoxide.</text>
</comment>
<comment type="catalytic activity">
    <reaction evidence="1">
        <text>L-methionyl-[protein] + a quinone + H2O = L-methionyl-(S)-S-oxide-[protein] + a quinol</text>
        <dbReference type="Rhea" id="RHEA:51292"/>
        <dbReference type="Rhea" id="RHEA-COMP:12313"/>
        <dbReference type="Rhea" id="RHEA-COMP:12315"/>
        <dbReference type="ChEBI" id="CHEBI:15377"/>
        <dbReference type="ChEBI" id="CHEBI:16044"/>
        <dbReference type="ChEBI" id="CHEBI:24646"/>
        <dbReference type="ChEBI" id="CHEBI:44120"/>
        <dbReference type="ChEBI" id="CHEBI:132124"/>
    </reaction>
</comment>
<comment type="catalytic activity">
    <reaction evidence="1">
        <text>L-methionyl-[protein] + a quinone + H2O = L-methionyl-(R)-S-oxide-[protein] + a quinol</text>
        <dbReference type="Rhea" id="RHEA:51296"/>
        <dbReference type="Rhea" id="RHEA-COMP:12313"/>
        <dbReference type="Rhea" id="RHEA-COMP:12314"/>
        <dbReference type="ChEBI" id="CHEBI:15377"/>
        <dbReference type="ChEBI" id="CHEBI:16044"/>
        <dbReference type="ChEBI" id="CHEBI:24646"/>
        <dbReference type="ChEBI" id="CHEBI:45764"/>
        <dbReference type="ChEBI" id="CHEBI:132124"/>
    </reaction>
</comment>
<comment type="cofactor">
    <cofactor evidence="1">
        <name>Mo-molybdopterin</name>
        <dbReference type="ChEBI" id="CHEBI:71302"/>
    </cofactor>
    <text evidence="1">Binds 1 Mo-molybdopterin (Mo-MPT) cofactor per subunit.</text>
</comment>
<comment type="subunit">
    <text evidence="1">Heterodimer of a catalytic subunit (MsrP) and a heme-binding subunit (MsrQ).</text>
</comment>
<comment type="subcellular location">
    <subcellularLocation>
        <location evidence="1">Periplasm</location>
    </subcellularLocation>
    <text evidence="1">Is attached to the inner membrane when interacting with the MsrQ subunit.</text>
</comment>
<comment type="PTM">
    <text evidence="1">Predicted to be exported by the Tat system. The position of the signal peptide cleavage has not been experimentally proven.</text>
</comment>
<comment type="similarity">
    <text evidence="1">Belongs to the MsrP family.</text>
</comment>
<feature type="signal peptide" description="Tat-type signal" evidence="1">
    <location>
        <begin position="1"/>
        <end position="44"/>
    </location>
</feature>
<feature type="chain" id="PRO_1000138724" description="Protein-methionine-sulfoxide reductase catalytic subunit MsrP" evidence="1">
    <location>
        <begin position="45"/>
        <end position="334"/>
    </location>
</feature>
<feature type="binding site" evidence="1">
    <location>
        <position position="88"/>
    </location>
    <ligand>
        <name>Mo-molybdopterin</name>
        <dbReference type="ChEBI" id="CHEBI:71302"/>
    </ligand>
</feature>
<feature type="binding site" evidence="1">
    <location>
        <begin position="91"/>
        <end position="92"/>
    </location>
    <ligand>
        <name>Mo-molybdopterin</name>
        <dbReference type="ChEBI" id="CHEBI:71302"/>
    </ligand>
</feature>
<feature type="binding site" evidence="1">
    <location>
        <position position="146"/>
    </location>
    <ligand>
        <name>Mo-molybdopterin</name>
        <dbReference type="ChEBI" id="CHEBI:71302"/>
    </ligand>
    <ligandPart>
        <name>Mo</name>
        <dbReference type="ChEBI" id="CHEBI:28685"/>
    </ligandPart>
</feature>
<feature type="binding site" evidence="1">
    <location>
        <position position="181"/>
    </location>
    <ligand>
        <name>Mo-molybdopterin</name>
        <dbReference type="ChEBI" id="CHEBI:71302"/>
    </ligand>
</feature>
<feature type="binding site" evidence="1">
    <location>
        <position position="233"/>
    </location>
    <ligand>
        <name>Mo-molybdopterin</name>
        <dbReference type="ChEBI" id="CHEBI:71302"/>
    </ligand>
</feature>
<feature type="binding site" evidence="1">
    <location>
        <position position="238"/>
    </location>
    <ligand>
        <name>Mo-molybdopterin</name>
        <dbReference type="ChEBI" id="CHEBI:71302"/>
    </ligand>
</feature>
<feature type="binding site" evidence="1">
    <location>
        <begin position="249"/>
        <end position="251"/>
    </location>
    <ligand>
        <name>Mo-molybdopterin</name>
        <dbReference type="ChEBI" id="CHEBI:71302"/>
    </ligand>
</feature>
<accession>B5BGT1</accession>
<evidence type="ECO:0000255" key="1">
    <source>
        <dbReference type="HAMAP-Rule" id="MF_01206"/>
    </source>
</evidence>
<name>MSRP_SALPK</name>
<organism>
    <name type="scientific">Salmonella paratyphi A (strain AKU_12601)</name>
    <dbReference type="NCBI Taxonomy" id="554290"/>
    <lineage>
        <taxon>Bacteria</taxon>
        <taxon>Pseudomonadati</taxon>
        <taxon>Pseudomonadota</taxon>
        <taxon>Gammaproteobacteria</taxon>
        <taxon>Enterobacterales</taxon>
        <taxon>Enterobacteriaceae</taxon>
        <taxon>Salmonella</taxon>
    </lineage>
</organism>
<reference key="1">
    <citation type="journal article" date="2009" name="BMC Genomics">
        <title>Pseudogene accumulation in the evolutionary histories of Salmonella enterica serovars Paratyphi A and Typhi.</title>
        <authorList>
            <person name="Holt K.E."/>
            <person name="Thomson N.R."/>
            <person name="Wain J."/>
            <person name="Langridge G.C."/>
            <person name="Hasan R."/>
            <person name="Bhutta Z.A."/>
            <person name="Quail M.A."/>
            <person name="Norbertczak H."/>
            <person name="Walker D."/>
            <person name="Simmonds M."/>
            <person name="White B."/>
            <person name="Bason N."/>
            <person name="Mungall K."/>
            <person name="Dougan G."/>
            <person name="Parkhill J."/>
        </authorList>
    </citation>
    <scope>NUCLEOTIDE SEQUENCE [LARGE SCALE GENOMIC DNA]</scope>
    <source>
        <strain>AKU_12601</strain>
    </source>
</reference>
<keyword id="KW-0479">Metal-binding</keyword>
<keyword id="KW-0500">Molybdenum</keyword>
<keyword id="KW-0560">Oxidoreductase</keyword>
<keyword id="KW-0574">Periplasm</keyword>
<keyword id="KW-0732">Signal</keyword>
<proteinExistence type="inferred from homology"/>
<dbReference type="EC" id="1.8.5.-" evidence="1"/>
<dbReference type="EMBL" id="FM200053">
    <property type="protein sequence ID" value="CAR61280.1"/>
    <property type="molecule type" value="Genomic_DNA"/>
</dbReference>
<dbReference type="RefSeq" id="WP_000723876.1">
    <property type="nucleotide sequence ID" value="NC_011147.1"/>
</dbReference>
<dbReference type="SMR" id="B5BGT1"/>
<dbReference type="KEGG" id="sek:SSPA3030"/>
<dbReference type="HOGENOM" id="CLU_045520_0_0_6"/>
<dbReference type="Proteomes" id="UP000001869">
    <property type="component" value="Chromosome"/>
</dbReference>
<dbReference type="GO" id="GO:0042597">
    <property type="term" value="C:periplasmic space"/>
    <property type="evidence" value="ECO:0007669"/>
    <property type="project" value="UniProtKB-SubCell"/>
</dbReference>
<dbReference type="GO" id="GO:0046872">
    <property type="term" value="F:metal ion binding"/>
    <property type="evidence" value="ECO:0007669"/>
    <property type="project" value="UniProtKB-KW"/>
</dbReference>
<dbReference type="GO" id="GO:0043546">
    <property type="term" value="F:molybdopterin cofactor binding"/>
    <property type="evidence" value="ECO:0007669"/>
    <property type="project" value="UniProtKB-UniRule"/>
</dbReference>
<dbReference type="GO" id="GO:0016672">
    <property type="term" value="F:oxidoreductase activity, acting on a sulfur group of donors, quinone or similar compound as acceptor"/>
    <property type="evidence" value="ECO:0007669"/>
    <property type="project" value="UniProtKB-UniRule"/>
</dbReference>
<dbReference type="GO" id="GO:0030091">
    <property type="term" value="P:protein repair"/>
    <property type="evidence" value="ECO:0007669"/>
    <property type="project" value="UniProtKB-UniRule"/>
</dbReference>
<dbReference type="CDD" id="cd02107">
    <property type="entry name" value="YedY_like_Moco"/>
    <property type="match status" value="1"/>
</dbReference>
<dbReference type="FunFam" id="3.90.420.10:FF:000001">
    <property type="entry name" value="Protein-methionine-sulfoxide reductase catalytic subunit MsrP"/>
    <property type="match status" value="1"/>
</dbReference>
<dbReference type="Gene3D" id="3.90.420.10">
    <property type="entry name" value="Oxidoreductase, molybdopterin-binding domain"/>
    <property type="match status" value="1"/>
</dbReference>
<dbReference type="HAMAP" id="MF_01206">
    <property type="entry name" value="MsrP"/>
    <property type="match status" value="1"/>
</dbReference>
<dbReference type="InterPro" id="IPR022867">
    <property type="entry name" value="MsrP"/>
</dbReference>
<dbReference type="InterPro" id="IPR000572">
    <property type="entry name" value="OxRdtase_Mopterin-bd_dom"/>
</dbReference>
<dbReference type="InterPro" id="IPR036374">
    <property type="entry name" value="OxRdtase_Mopterin-bd_sf"/>
</dbReference>
<dbReference type="InterPro" id="IPR006311">
    <property type="entry name" value="TAT_signal"/>
</dbReference>
<dbReference type="NCBIfam" id="NF003767">
    <property type="entry name" value="PRK05363.1"/>
    <property type="match status" value="1"/>
</dbReference>
<dbReference type="PANTHER" id="PTHR43032">
    <property type="entry name" value="PROTEIN-METHIONINE-SULFOXIDE REDUCTASE"/>
    <property type="match status" value="1"/>
</dbReference>
<dbReference type="PANTHER" id="PTHR43032:SF3">
    <property type="entry name" value="PROTEIN-METHIONINE-SULFOXIDE REDUCTASE CATALYTIC SUBUNIT MSRP"/>
    <property type="match status" value="1"/>
</dbReference>
<dbReference type="Pfam" id="PF00174">
    <property type="entry name" value="Oxidored_molyb"/>
    <property type="match status" value="1"/>
</dbReference>
<dbReference type="SUPFAM" id="SSF56524">
    <property type="entry name" value="Oxidoreductase molybdopterin-binding domain"/>
    <property type="match status" value="1"/>
</dbReference>
<dbReference type="PROSITE" id="PS51318">
    <property type="entry name" value="TAT"/>
    <property type="match status" value="1"/>
</dbReference>
<sequence length="334" mass="37492">MKKIRPLTEADVTAESAFFMQRRQVLKALGISAAALSLPSTAQADLFSWFKGNDRPKAPAGKPLEFSQPAAWRSDLALTPEDKVTGYNNFYEFGLDKADPAANAGSLKTEPWTLKISGEVAKPFTLDYDDLTHRFPLEERIYRMRCVEAWSMVVPWIGFPLYKLLAQAQPTSHAKYVAFETLYAPDDMPGQKDRFIGGGLKYPYVEGLRLDEAMHPLTLMTVGVYGKALPPQNGAPIRLIVPWKYGFKGIKSIVSIKLTRERPPTTWNLSAPNEYGFYANVNPHVDHPRWSQATERFIGSGGILDVQRQPTLLFNGYANEVASLYRGLNLRENF</sequence>
<protein>
    <recommendedName>
        <fullName evidence="1">Protein-methionine-sulfoxide reductase catalytic subunit MsrP</fullName>
        <ecNumber evidence="1">1.8.5.-</ecNumber>
    </recommendedName>
</protein>
<gene>
    <name evidence="1" type="primary">msrP</name>
    <name type="ordered locus">SSPA3030</name>
</gene>